<gene>
    <name type="ordered locus">lmo2224</name>
</gene>
<keyword id="KW-1003">Cell membrane</keyword>
<keyword id="KW-0472">Membrane</keyword>
<keyword id="KW-1185">Reference proteome</keyword>
<keyword id="KW-0812">Transmembrane</keyword>
<keyword id="KW-1133">Transmembrane helix</keyword>
<feature type="chain" id="PRO_0000388296" description="UPF0754 membrane protein lmo2224">
    <location>
        <begin position="1"/>
        <end position="377"/>
    </location>
</feature>
<feature type="transmembrane region" description="Helical" evidence="2">
    <location>
        <begin position="1"/>
        <end position="21"/>
    </location>
</feature>
<feature type="transmembrane region" description="Helical" evidence="2">
    <location>
        <begin position="357"/>
        <end position="377"/>
    </location>
</feature>
<sequence>MSVLFTILLMAVIGGFIGAMTNYIAIRMLFRPYKAIYLFNKRLPFTPGLIPKRRDELAEHIGKVVVSHLLTEDAIRARLLDENLQKEITDTITKMFHEKMKLETTPNELLHHFGYENAEIRSMAWIEKTLEKEINHFLSTKKTTKMSDLIPTMLESELTTKLPHVTERITSKMTLFVASEEGKIQIKQMLQKFFEEHGKMGSMARMFINIDSFSEKIQQEGLKLIGQEDTKNLINQLLTTEWKNFEAKELQELIPTEKQAHLAGQLTSELIQTLPHEKLFNQPIQVILRGYEAAITEKVIPFAVERMLDFVATHSAEIVERMDLAKLVETQIATFSLPEIEKLVVEISGRELKMITYLGGILGGFIGIIQGILAMWI</sequence>
<accession>Q8Y552</accession>
<reference key="1">
    <citation type="journal article" date="2001" name="Science">
        <title>Comparative genomics of Listeria species.</title>
        <authorList>
            <person name="Glaser P."/>
            <person name="Frangeul L."/>
            <person name="Buchrieser C."/>
            <person name="Rusniok C."/>
            <person name="Amend A."/>
            <person name="Baquero F."/>
            <person name="Berche P."/>
            <person name="Bloecker H."/>
            <person name="Brandt P."/>
            <person name="Chakraborty T."/>
            <person name="Charbit A."/>
            <person name="Chetouani F."/>
            <person name="Couve E."/>
            <person name="de Daruvar A."/>
            <person name="Dehoux P."/>
            <person name="Domann E."/>
            <person name="Dominguez-Bernal G."/>
            <person name="Duchaud E."/>
            <person name="Durant L."/>
            <person name="Dussurget O."/>
            <person name="Entian K.-D."/>
            <person name="Fsihi H."/>
            <person name="Garcia-del Portillo F."/>
            <person name="Garrido P."/>
            <person name="Gautier L."/>
            <person name="Goebel W."/>
            <person name="Gomez-Lopez N."/>
            <person name="Hain T."/>
            <person name="Hauf J."/>
            <person name="Jackson D."/>
            <person name="Jones L.-M."/>
            <person name="Kaerst U."/>
            <person name="Kreft J."/>
            <person name="Kuhn M."/>
            <person name="Kunst F."/>
            <person name="Kurapkat G."/>
            <person name="Madueno E."/>
            <person name="Maitournam A."/>
            <person name="Mata Vicente J."/>
            <person name="Ng E."/>
            <person name="Nedjari H."/>
            <person name="Nordsiek G."/>
            <person name="Novella S."/>
            <person name="de Pablos B."/>
            <person name="Perez-Diaz J.-C."/>
            <person name="Purcell R."/>
            <person name="Remmel B."/>
            <person name="Rose M."/>
            <person name="Schlueter T."/>
            <person name="Simoes N."/>
            <person name="Tierrez A."/>
            <person name="Vazquez-Boland J.-A."/>
            <person name="Voss H."/>
            <person name="Wehland J."/>
            <person name="Cossart P."/>
        </authorList>
    </citation>
    <scope>NUCLEOTIDE SEQUENCE [LARGE SCALE GENOMIC DNA]</scope>
    <source>
        <strain>ATCC BAA-679 / EGD-e</strain>
    </source>
</reference>
<comment type="subcellular location">
    <subcellularLocation>
        <location evidence="1">Cell membrane</location>
        <topology evidence="1">Multi-pass membrane protein</topology>
    </subcellularLocation>
</comment>
<comment type="similarity">
    <text evidence="3">Belongs to the UPF0754 family.</text>
</comment>
<organism>
    <name type="scientific">Listeria monocytogenes serovar 1/2a (strain ATCC BAA-679 / EGD-e)</name>
    <dbReference type="NCBI Taxonomy" id="169963"/>
    <lineage>
        <taxon>Bacteria</taxon>
        <taxon>Bacillati</taxon>
        <taxon>Bacillota</taxon>
        <taxon>Bacilli</taxon>
        <taxon>Bacillales</taxon>
        <taxon>Listeriaceae</taxon>
        <taxon>Listeria</taxon>
    </lineage>
</organism>
<evidence type="ECO:0000250" key="1"/>
<evidence type="ECO:0000255" key="2"/>
<evidence type="ECO:0000305" key="3"/>
<name>Y2224_LISMO</name>
<dbReference type="EMBL" id="AL591982">
    <property type="protein sequence ID" value="CAD00302.1"/>
    <property type="molecule type" value="Genomic_DNA"/>
</dbReference>
<dbReference type="PIR" id="AH1352">
    <property type="entry name" value="AH1352"/>
</dbReference>
<dbReference type="RefSeq" id="NP_465748.1">
    <property type="nucleotide sequence ID" value="NC_003210.1"/>
</dbReference>
<dbReference type="RefSeq" id="WP_009930567.1">
    <property type="nucleotide sequence ID" value="NZ_CP149495.1"/>
</dbReference>
<dbReference type="SMR" id="Q8Y552"/>
<dbReference type="STRING" id="169963.gene:17594915"/>
<dbReference type="PaxDb" id="169963-lmo2224"/>
<dbReference type="EnsemblBacteria" id="CAD00302">
    <property type="protein sequence ID" value="CAD00302"/>
    <property type="gene ID" value="CAD00302"/>
</dbReference>
<dbReference type="GeneID" id="985253"/>
<dbReference type="KEGG" id="lmo:lmo2224"/>
<dbReference type="PATRIC" id="fig|169963.11.peg.2276"/>
<dbReference type="eggNOG" id="COG4399">
    <property type="taxonomic scope" value="Bacteria"/>
</dbReference>
<dbReference type="HOGENOM" id="CLU_042384_0_0_9"/>
<dbReference type="OrthoDB" id="9787430at2"/>
<dbReference type="PhylomeDB" id="Q8Y552"/>
<dbReference type="BioCyc" id="LMON169963:LMO2224-MONOMER"/>
<dbReference type="Proteomes" id="UP000000817">
    <property type="component" value="Chromosome"/>
</dbReference>
<dbReference type="GO" id="GO:0005886">
    <property type="term" value="C:plasma membrane"/>
    <property type="evidence" value="ECO:0007669"/>
    <property type="project" value="UniProtKB-SubCell"/>
</dbReference>
<dbReference type="InterPro" id="IPR007383">
    <property type="entry name" value="DUF445"/>
</dbReference>
<dbReference type="InterPro" id="IPR016991">
    <property type="entry name" value="UCP032178"/>
</dbReference>
<dbReference type="PANTHER" id="PTHR35791">
    <property type="entry name" value="UPF0754 MEMBRANE PROTEIN YHEB"/>
    <property type="match status" value="1"/>
</dbReference>
<dbReference type="PANTHER" id="PTHR35791:SF1">
    <property type="entry name" value="UPF0754 MEMBRANE PROTEIN YHEB"/>
    <property type="match status" value="1"/>
</dbReference>
<dbReference type="Pfam" id="PF04286">
    <property type="entry name" value="DUF445"/>
    <property type="match status" value="1"/>
</dbReference>
<dbReference type="PIRSF" id="PIRSF032178">
    <property type="entry name" value="UCP032178"/>
    <property type="match status" value="1"/>
</dbReference>
<protein>
    <recommendedName>
        <fullName>UPF0754 membrane protein lmo2224</fullName>
    </recommendedName>
</protein>
<proteinExistence type="inferred from homology"/>